<proteinExistence type="inferred from homology"/>
<accession>Q9JTJ9</accession>
<accession>A1ISW0</accession>
<evidence type="ECO:0000255" key="1">
    <source>
        <dbReference type="HAMAP-Rule" id="MF_00144"/>
    </source>
</evidence>
<evidence type="ECO:0000305" key="2"/>
<feature type="chain" id="PRO_0000121658" description="tRNA-specific 2-thiouridylase MnmA">
    <location>
        <begin position="1"/>
        <end position="367"/>
    </location>
</feature>
<feature type="region of interest" description="Interaction with target base in tRNA" evidence="1">
    <location>
        <begin position="99"/>
        <end position="101"/>
    </location>
</feature>
<feature type="region of interest" description="Interaction with tRNA" evidence="1">
    <location>
        <begin position="150"/>
        <end position="152"/>
    </location>
</feature>
<feature type="region of interest" description="Interaction with tRNA" evidence="1">
    <location>
        <begin position="307"/>
        <end position="308"/>
    </location>
</feature>
<feature type="active site" description="Nucleophile" evidence="1">
    <location>
        <position position="104"/>
    </location>
</feature>
<feature type="active site" description="Cysteine persulfide intermediate" evidence="1">
    <location>
        <position position="200"/>
    </location>
</feature>
<feature type="binding site" evidence="1">
    <location>
        <begin position="13"/>
        <end position="20"/>
    </location>
    <ligand>
        <name>ATP</name>
        <dbReference type="ChEBI" id="CHEBI:30616"/>
    </ligand>
</feature>
<feature type="binding site" evidence="1">
    <location>
        <position position="39"/>
    </location>
    <ligand>
        <name>ATP</name>
        <dbReference type="ChEBI" id="CHEBI:30616"/>
    </ligand>
</feature>
<feature type="binding site" evidence="1">
    <location>
        <position position="128"/>
    </location>
    <ligand>
        <name>ATP</name>
        <dbReference type="ChEBI" id="CHEBI:30616"/>
    </ligand>
</feature>
<feature type="site" description="Interaction with tRNA" evidence="1">
    <location>
        <position position="129"/>
    </location>
</feature>
<feature type="site" description="Interaction with tRNA" evidence="1">
    <location>
        <position position="340"/>
    </location>
</feature>
<feature type="disulfide bond" description="Alternate" evidence="1">
    <location>
        <begin position="104"/>
        <end position="200"/>
    </location>
</feature>
<sequence>MNTTANPSNIIVGLSGGVDSSVTAALLKQQGYQVRGVFMQNWEDDDNDEYCSIKQDSFDAIAVADIVGIDIDIVNFAAQYKDKVFAYFLQEYSAGRTPNPDVLCNAEIKFKCFLDYAVGQGADTIATGHYARKEVRNGVHYLLKGLDQNKDQSYFLYRLKPFQLERAIFPLGGLEKPEVRRLAAEFNLPTAAKKDSTGICFIGERPFREFLQKYLPTDNGKMVTPEGKTVGEHVGLMFYTLGQRKGLGIGGGGEPWFVAAKDLTKNELMVVQGHDHPLLYTRSLVMNDLSFTLPERPKEGHYTCKTRYRMADAPCELRYLDDETVELVFDEPQWAVTPGQSAVLYDGDICLGGGIIQSTDKPVIITR</sequence>
<protein>
    <recommendedName>
        <fullName evidence="1">tRNA-specific 2-thiouridylase MnmA</fullName>
        <ecNumber evidence="1">2.8.1.13</ecNumber>
    </recommendedName>
</protein>
<name>MNMA_NEIMA</name>
<keyword id="KW-0067">ATP-binding</keyword>
<keyword id="KW-0963">Cytoplasm</keyword>
<keyword id="KW-1015">Disulfide bond</keyword>
<keyword id="KW-0547">Nucleotide-binding</keyword>
<keyword id="KW-0694">RNA-binding</keyword>
<keyword id="KW-0808">Transferase</keyword>
<keyword id="KW-0819">tRNA processing</keyword>
<keyword id="KW-0820">tRNA-binding</keyword>
<comment type="function">
    <text evidence="1">Catalyzes the 2-thiolation of uridine at the wobble position (U34) of tRNA, leading to the formation of s(2)U34.</text>
</comment>
<comment type="catalytic activity">
    <reaction evidence="1">
        <text>S-sulfanyl-L-cysteinyl-[protein] + uridine(34) in tRNA + AH2 + ATP = 2-thiouridine(34) in tRNA + L-cysteinyl-[protein] + A + AMP + diphosphate + H(+)</text>
        <dbReference type="Rhea" id="RHEA:47032"/>
        <dbReference type="Rhea" id="RHEA-COMP:10131"/>
        <dbReference type="Rhea" id="RHEA-COMP:11726"/>
        <dbReference type="Rhea" id="RHEA-COMP:11727"/>
        <dbReference type="Rhea" id="RHEA-COMP:11728"/>
        <dbReference type="ChEBI" id="CHEBI:13193"/>
        <dbReference type="ChEBI" id="CHEBI:15378"/>
        <dbReference type="ChEBI" id="CHEBI:17499"/>
        <dbReference type="ChEBI" id="CHEBI:29950"/>
        <dbReference type="ChEBI" id="CHEBI:30616"/>
        <dbReference type="ChEBI" id="CHEBI:33019"/>
        <dbReference type="ChEBI" id="CHEBI:61963"/>
        <dbReference type="ChEBI" id="CHEBI:65315"/>
        <dbReference type="ChEBI" id="CHEBI:87170"/>
        <dbReference type="ChEBI" id="CHEBI:456215"/>
        <dbReference type="EC" id="2.8.1.13"/>
    </reaction>
</comment>
<comment type="subcellular location">
    <subcellularLocation>
        <location evidence="1">Cytoplasm</location>
    </subcellularLocation>
</comment>
<comment type="similarity">
    <text evidence="1">Belongs to the MnmA/TRMU family.</text>
</comment>
<comment type="sequence caution" evidence="2">
    <conflict type="erroneous initiation">
        <sequence resource="EMBL-CDS" id="CAM08872"/>
    </conflict>
</comment>
<dbReference type="EC" id="2.8.1.13" evidence="1"/>
<dbReference type="EMBL" id="AL157959">
    <property type="protein sequence ID" value="CAM08872.1"/>
    <property type="status" value="ALT_INIT"/>
    <property type="molecule type" value="Genomic_DNA"/>
</dbReference>
<dbReference type="RefSeq" id="WP_042507231.1">
    <property type="nucleotide sequence ID" value="NC_003116.1"/>
</dbReference>
<dbReference type="SMR" id="Q9JTJ9"/>
<dbReference type="EnsemblBacteria" id="CAM08872">
    <property type="protein sequence ID" value="CAM08872"/>
    <property type="gene ID" value="NMA1744"/>
</dbReference>
<dbReference type="KEGG" id="nma:NMA1744"/>
<dbReference type="HOGENOM" id="CLU_035188_1_0_4"/>
<dbReference type="Proteomes" id="UP000000626">
    <property type="component" value="Chromosome"/>
</dbReference>
<dbReference type="GO" id="GO:0005737">
    <property type="term" value="C:cytoplasm"/>
    <property type="evidence" value="ECO:0007669"/>
    <property type="project" value="UniProtKB-SubCell"/>
</dbReference>
<dbReference type="GO" id="GO:0005524">
    <property type="term" value="F:ATP binding"/>
    <property type="evidence" value="ECO:0007669"/>
    <property type="project" value="UniProtKB-KW"/>
</dbReference>
<dbReference type="GO" id="GO:0000049">
    <property type="term" value="F:tRNA binding"/>
    <property type="evidence" value="ECO:0007669"/>
    <property type="project" value="UniProtKB-KW"/>
</dbReference>
<dbReference type="GO" id="GO:0103016">
    <property type="term" value="F:tRNA-uridine 2-sulfurtransferase activity"/>
    <property type="evidence" value="ECO:0007669"/>
    <property type="project" value="UniProtKB-EC"/>
</dbReference>
<dbReference type="GO" id="GO:0002143">
    <property type="term" value="P:tRNA wobble position uridine thiolation"/>
    <property type="evidence" value="ECO:0007669"/>
    <property type="project" value="TreeGrafter"/>
</dbReference>
<dbReference type="CDD" id="cd01998">
    <property type="entry name" value="MnmA_TRMU-like"/>
    <property type="match status" value="1"/>
</dbReference>
<dbReference type="FunFam" id="2.30.30.280:FF:000001">
    <property type="entry name" value="tRNA-specific 2-thiouridylase MnmA"/>
    <property type="match status" value="1"/>
</dbReference>
<dbReference type="FunFam" id="2.40.30.10:FF:000023">
    <property type="entry name" value="tRNA-specific 2-thiouridylase MnmA"/>
    <property type="match status" value="1"/>
</dbReference>
<dbReference type="FunFam" id="3.40.50.620:FF:000004">
    <property type="entry name" value="tRNA-specific 2-thiouridylase MnmA"/>
    <property type="match status" value="1"/>
</dbReference>
<dbReference type="Gene3D" id="2.30.30.280">
    <property type="entry name" value="Adenine nucleotide alpha hydrolases-like domains"/>
    <property type="match status" value="1"/>
</dbReference>
<dbReference type="Gene3D" id="3.40.50.620">
    <property type="entry name" value="HUPs"/>
    <property type="match status" value="1"/>
</dbReference>
<dbReference type="Gene3D" id="2.40.30.10">
    <property type="entry name" value="Translation factors"/>
    <property type="match status" value="1"/>
</dbReference>
<dbReference type="HAMAP" id="MF_00144">
    <property type="entry name" value="tRNA_thiouridyl_MnmA"/>
    <property type="match status" value="1"/>
</dbReference>
<dbReference type="InterPro" id="IPR004506">
    <property type="entry name" value="MnmA-like"/>
</dbReference>
<dbReference type="InterPro" id="IPR046885">
    <property type="entry name" value="MnmA-like_C"/>
</dbReference>
<dbReference type="InterPro" id="IPR046884">
    <property type="entry name" value="MnmA-like_central"/>
</dbReference>
<dbReference type="InterPro" id="IPR023382">
    <property type="entry name" value="MnmA-like_central_sf"/>
</dbReference>
<dbReference type="InterPro" id="IPR014729">
    <property type="entry name" value="Rossmann-like_a/b/a_fold"/>
</dbReference>
<dbReference type="NCBIfam" id="NF001138">
    <property type="entry name" value="PRK00143.1"/>
    <property type="match status" value="1"/>
</dbReference>
<dbReference type="NCBIfam" id="TIGR00420">
    <property type="entry name" value="trmU"/>
    <property type="match status" value="1"/>
</dbReference>
<dbReference type="PANTHER" id="PTHR11933:SF5">
    <property type="entry name" value="MITOCHONDRIAL TRNA-SPECIFIC 2-THIOURIDYLASE 1"/>
    <property type="match status" value="1"/>
</dbReference>
<dbReference type="PANTHER" id="PTHR11933">
    <property type="entry name" value="TRNA 5-METHYLAMINOMETHYL-2-THIOURIDYLATE -METHYLTRANSFERASE"/>
    <property type="match status" value="1"/>
</dbReference>
<dbReference type="Pfam" id="PF03054">
    <property type="entry name" value="tRNA_Me_trans"/>
    <property type="match status" value="1"/>
</dbReference>
<dbReference type="Pfam" id="PF20258">
    <property type="entry name" value="tRNA_Me_trans_C"/>
    <property type="match status" value="1"/>
</dbReference>
<dbReference type="Pfam" id="PF20259">
    <property type="entry name" value="tRNA_Me_trans_M"/>
    <property type="match status" value="1"/>
</dbReference>
<dbReference type="SUPFAM" id="SSF52402">
    <property type="entry name" value="Adenine nucleotide alpha hydrolases-like"/>
    <property type="match status" value="1"/>
</dbReference>
<gene>
    <name evidence="1" type="primary">mnmA</name>
    <name type="synonym">trmU</name>
    <name type="ordered locus">NMA1744</name>
</gene>
<organism>
    <name type="scientific">Neisseria meningitidis serogroup A / serotype 4A (strain DSM 15465 / Z2491)</name>
    <dbReference type="NCBI Taxonomy" id="122587"/>
    <lineage>
        <taxon>Bacteria</taxon>
        <taxon>Pseudomonadati</taxon>
        <taxon>Pseudomonadota</taxon>
        <taxon>Betaproteobacteria</taxon>
        <taxon>Neisseriales</taxon>
        <taxon>Neisseriaceae</taxon>
        <taxon>Neisseria</taxon>
    </lineage>
</organism>
<reference key="1">
    <citation type="journal article" date="2000" name="Nature">
        <title>Complete DNA sequence of a serogroup A strain of Neisseria meningitidis Z2491.</title>
        <authorList>
            <person name="Parkhill J."/>
            <person name="Achtman M."/>
            <person name="James K.D."/>
            <person name="Bentley S.D."/>
            <person name="Churcher C.M."/>
            <person name="Klee S.R."/>
            <person name="Morelli G."/>
            <person name="Basham D."/>
            <person name="Brown D."/>
            <person name="Chillingworth T."/>
            <person name="Davies R.M."/>
            <person name="Davis P."/>
            <person name="Devlin K."/>
            <person name="Feltwell T."/>
            <person name="Hamlin N."/>
            <person name="Holroyd S."/>
            <person name="Jagels K."/>
            <person name="Leather S."/>
            <person name="Moule S."/>
            <person name="Mungall K.L."/>
            <person name="Quail M.A."/>
            <person name="Rajandream M.A."/>
            <person name="Rutherford K.M."/>
            <person name="Simmonds M."/>
            <person name="Skelton J."/>
            <person name="Whitehead S."/>
            <person name="Spratt B.G."/>
            <person name="Barrell B.G."/>
        </authorList>
    </citation>
    <scope>NUCLEOTIDE SEQUENCE [LARGE SCALE GENOMIC DNA]</scope>
    <source>
        <strain>DSM 15465 / Z2491</strain>
    </source>
</reference>